<evidence type="ECO:0000255" key="1">
    <source>
        <dbReference type="HAMAP-Rule" id="MF_00098"/>
    </source>
</evidence>
<reference key="1">
    <citation type="journal article" date="2005" name="Proc. Natl. Acad. Sci. U.S.A.">
        <title>Comparison of the complete genome sequences of Pseudomonas syringae pv. syringae B728a and pv. tomato DC3000.</title>
        <authorList>
            <person name="Feil H."/>
            <person name="Feil W.S."/>
            <person name="Chain P."/>
            <person name="Larimer F."/>
            <person name="Dibartolo G."/>
            <person name="Copeland A."/>
            <person name="Lykidis A."/>
            <person name="Trong S."/>
            <person name="Nolan M."/>
            <person name="Goltsman E."/>
            <person name="Thiel J."/>
            <person name="Malfatti S."/>
            <person name="Loper J.E."/>
            <person name="Lapidus A."/>
            <person name="Detter J.C."/>
            <person name="Land M."/>
            <person name="Richardson P.M."/>
            <person name="Kyrpides N.C."/>
            <person name="Ivanova N."/>
            <person name="Lindow S.E."/>
        </authorList>
    </citation>
    <scope>NUCLEOTIDE SEQUENCE [LARGE SCALE GENOMIC DNA]</scope>
    <source>
        <strain>B728a</strain>
    </source>
</reference>
<organism>
    <name type="scientific">Pseudomonas syringae pv. syringae (strain B728a)</name>
    <dbReference type="NCBI Taxonomy" id="205918"/>
    <lineage>
        <taxon>Bacteria</taxon>
        <taxon>Pseudomonadati</taxon>
        <taxon>Pseudomonadota</taxon>
        <taxon>Gammaproteobacteria</taxon>
        <taxon>Pseudomonadales</taxon>
        <taxon>Pseudomonadaceae</taxon>
        <taxon>Pseudomonas</taxon>
        <taxon>Pseudomonas syringae</taxon>
    </lineage>
</organism>
<keyword id="KW-0030">Aminoacyl-tRNA synthetase</keyword>
<keyword id="KW-0067">ATP-binding</keyword>
<keyword id="KW-0963">Cytoplasm</keyword>
<keyword id="KW-0436">Ligase</keyword>
<keyword id="KW-0479">Metal-binding</keyword>
<keyword id="KW-0547">Nucleotide-binding</keyword>
<keyword id="KW-0648">Protein biosynthesis</keyword>
<keyword id="KW-0694">RNA-binding</keyword>
<keyword id="KW-0820">tRNA-binding</keyword>
<keyword id="KW-0862">Zinc</keyword>
<feature type="chain" id="PRO_0000331877" description="Methionine--tRNA ligase">
    <location>
        <begin position="1"/>
        <end position="682"/>
    </location>
</feature>
<feature type="domain" description="tRNA-binding" evidence="1">
    <location>
        <begin position="580"/>
        <end position="682"/>
    </location>
</feature>
<feature type="short sequence motif" description="'HIGH' region">
    <location>
        <begin position="14"/>
        <end position="24"/>
    </location>
</feature>
<feature type="short sequence motif" description="'KMSKS' region">
    <location>
        <begin position="331"/>
        <end position="335"/>
    </location>
</feature>
<feature type="binding site" evidence="1">
    <location>
        <position position="145"/>
    </location>
    <ligand>
        <name>Zn(2+)</name>
        <dbReference type="ChEBI" id="CHEBI:29105"/>
    </ligand>
</feature>
<feature type="binding site" evidence="1">
    <location>
        <position position="148"/>
    </location>
    <ligand>
        <name>Zn(2+)</name>
        <dbReference type="ChEBI" id="CHEBI:29105"/>
    </ligand>
</feature>
<feature type="binding site" evidence="1">
    <location>
        <position position="158"/>
    </location>
    <ligand>
        <name>Zn(2+)</name>
        <dbReference type="ChEBI" id="CHEBI:29105"/>
    </ligand>
</feature>
<feature type="binding site" evidence="1">
    <location>
        <position position="161"/>
    </location>
    <ligand>
        <name>Zn(2+)</name>
        <dbReference type="ChEBI" id="CHEBI:29105"/>
    </ligand>
</feature>
<feature type="binding site" evidence="1">
    <location>
        <position position="334"/>
    </location>
    <ligand>
        <name>ATP</name>
        <dbReference type="ChEBI" id="CHEBI:30616"/>
    </ligand>
</feature>
<sequence>MSEPRKILVTSALPYANGSIHLGHMLEYIQTDMWVRFQKHRGNQCIYVCADDAHGSAIMLRAEKEGITPEQLIANVKAEHSADFADFLVEFDNFHSTHSDENRELSSMIYKRLRDAGHIATRSVTQYFDPEKKMFLADRFIKGTCPKCAAEDQYGDNCEKCGATYAPTDLKDPKSAISGATPVLKDSKHFFFDLPAFDAMLKSWTRSGTLQDAVANKIAEWLDSGLQQWDISRDAPYFGFEIPDEPGKYFYVWLDAPIGYMASFKNLCARRPDLDFDAYWGKGATTELYHFIGKDIVNFHALFWPAMLEGAELRTPTGINVHGYLTVNGQKMSKSRGTFIKARTYLDHLPPEYLRYYYASKLGRGVDDLDLNLEDFVQKVNSDLIGKVVNIASRCAGFIHKGNAGVMVEANAAPELTDAFLTAAPSIADAYEARDFARAMRETMALADRANAYIAEKAPWALAKQEGRQDEVQAVCALGINLFRQLVIFLKPVLPNLAADAEKFLNVEPLTWEDHKTLLANHQLNPFSALMTRIDPVKVEAMATASKEDLTATDSSADTAPAGNGELAKDPLSAEIDFDAFAAIDLRVALILKAEHVEGADKLLRLTLDIGDEQRNVFSGIKSAYPNPSELEGRLTMMIANLKPRKMRFGISQGMVMAAGPGGEEIYLLSPDSGARPGQRIK</sequence>
<proteinExistence type="inferred from homology"/>
<name>SYM_PSEU2</name>
<accession>Q4ZPK6</accession>
<protein>
    <recommendedName>
        <fullName evidence="1">Methionine--tRNA ligase</fullName>
        <ecNumber evidence="1">6.1.1.10</ecNumber>
    </recommendedName>
    <alternativeName>
        <fullName evidence="1">Methionyl-tRNA synthetase</fullName>
        <shortName evidence="1">MetRS</shortName>
    </alternativeName>
</protein>
<gene>
    <name evidence="1" type="primary">metG</name>
    <name type="ordered locus">Psyr_3886</name>
</gene>
<comment type="function">
    <text evidence="1">Is required not only for elongation of protein synthesis but also for the initiation of all mRNA translation through initiator tRNA(fMet) aminoacylation.</text>
</comment>
<comment type="catalytic activity">
    <reaction evidence="1">
        <text>tRNA(Met) + L-methionine + ATP = L-methionyl-tRNA(Met) + AMP + diphosphate</text>
        <dbReference type="Rhea" id="RHEA:13481"/>
        <dbReference type="Rhea" id="RHEA-COMP:9667"/>
        <dbReference type="Rhea" id="RHEA-COMP:9698"/>
        <dbReference type="ChEBI" id="CHEBI:30616"/>
        <dbReference type="ChEBI" id="CHEBI:33019"/>
        <dbReference type="ChEBI" id="CHEBI:57844"/>
        <dbReference type="ChEBI" id="CHEBI:78442"/>
        <dbReference type="ChEBI" id="CHEBI:78530"/>
        <dbReference type="ChEBI" id="CHEBI:456215"/>
        <dbReference type="EC" id="6.1.1.10"/>
    </reaction>
</comment>
<comment type="cofactor">
    <cofactor evidence="1">
        <name>Zn(2+)</name>
        <dbReference type="ChEBI" id="CHEBI:29105"/>
    </cofactor>
    <text evidence="1">Binds 1 zinc ion per subunit.</text>
</comment>
<comment type="subunit">
    <text evidence="1">Homodimer.</text>
</comment>
<comment type="subcellular location">
    <subcellularLocation>
        <location evidence="1">Cytoplasm</location>
    </subcellularLocation>
</comment>
<comment type="similarity">
    <text evidence="1">Belongs to the class-I aminoacyl-tRNA synthetase family. MetG type 1 subfamily.</text>
</comment>
<dbReference type="EC" id="6.1.1.10" evidence="1"/>
<dbReference type="EMBL" id="CP000075">
    <property type="protein sequence ID" value="AAY38916.1"/>
    <property type="molecule type" value="Genomic_DNA"/>
</dbReference>
<dbReference type="RefSeq" id="WP_011268718.1">
    <property type="nucleotide sequence ID" value="NC_007005.1"/>
</dbReference>
<dbReference type="RefSeq" id="YP_236954.1">
    <property type="nucleotide sequence ID" value="NC_007005.1"/>
</dbReference>
<dbReference type="SMR" id="Q4ZPK6"/>
<dbReference type="STRING" id="205918.Psyr_3886"/>
<dbReference type="KEGG" id="psb:Psyr_3886"/>
<dbReference type="PATRIC" id="fig|205918.7.peg.3997"/>
<dbReference type="eggNOG" id="COG0073">
    <property type="taxonomic scope" value="Bacteria"/>
</dbReference>
<dbReference type="eggNOG" id="COG0143">
    <property type="taxonomic scope" value="Bacteria"/>
</dbReference>
<dbReference type="HOGENOM" id="CLU_009710_7_0_6"/>
<dbReference type="OrthoDB" id="9810191at2"/>
<dbReference type="Proteomes" id="UP000000426">
    <property type="component" value="Chromosome"/>
</dbReference>
<dbReference type="GO" id="GO:0005829">
    <property type="term" value="C:cytosol"/>
    <property type="evidence" value="ECO:0007669"/>
    <property type="project" value="TreeGrafter"/>
</dbReference>
<dbReference type="GO" id="GO:0005524">
    <property type="term" value="F:ATP binding"/>
    <property type="evidence" value="ECO:0007669"/>
    <property type="project" value="UniProtKB-UniRule"/>
</dbReference>
<dbReference type="GO" id="GO:0046872">
    <property type="term" value="F:metal ion binding"/>
    <property type="evidence" value="ECO:0007669"/>
    <property type="project" value="UniProtKB-KW"/>
</dbReference>
<dbReference type="GO" id="GO:0004825">
    <property type="term" value="F:methionine-tRNA ligase activity"/>
    <property type="evidence" value="ECO:0007669"/>
    <property type="project" value="UniProtKB-UniRule"/>
</dbReference>
<dbReference type="GO" id="GO:0000049">
    <property type="term" value="F:tRNA binding"/>
    <property type="evidence" value="ECO:0007669"/>
    <property type="project" value="UniProtKB-KW"/>
</dbReference>
<dbReference type="GO" id="GO:0006431">
    <property type="term" value="P:methionyl-tRNA aminoacylation"/>
    <property type="evidence" value="ECO:0007669"/>
    <property type="project" value="UniProtKB-UniRule"/>
</dbReference>
<dbReference type="CDD" id="cd07957">
    <property type="entry name" value="Anticodon_Ia_Met"/>
    <property type="match status" value="1"/>
</dbReference>
<dbReference type="CDD" id="cd00814">
    <property type="entry name" value="MetRS_core"/>
    <property type="match status" value="1"/>
</dbReference>
<dbReference type="CDD" id="cd02800">
    <property type="entry name" value="tRNA_bind_EcMetRS_like"/>
    <property type="match status" value="1"/>
</dbReference>
<dbReference type="FunFam" id="1.10.730.10:FF:000005">
    <property type="entry name" value="Methionine--tRNA ligase"/>
    <property type="match status" value="1"/>
</dbReference>
<dbReference type="FunFam" id="2.20.28.20:FF:000001">
    <property type="entry name" value="Methionine--tRNA ligase"/>
    <property type="match status" value="1"/>
</dbReference>
<dbReference type="FunFam" id="2.40.50.140:FF:000042">
    <property type="entry name" value="Methionine--tRNA ligase"/>
    <property type="match status" value="1"/>
</dbReference>
<dbReference type="Gene3D" id="3.40.50.620">
    <property type="entry name" value="HUPs"/>
    <property type="match status" value="1"/>
</dbReference>
<dbReference type="Gene3D" id="1.10.730.10">
    <property type="entry name" value="Isoleucyl-tRNA Synthetase, Domain 1"/>
    <property type="match status" value="1"/>
</dbReference>
<dbReference type="Gene3D" id="2.20.28.20">
    <property type="entry name" value="Methionyl-tRNA synthetase, Zn-domain"/>
    <property type="match status" value="1"/>
</dbReference>
<dbReference type="Gene3D" id="2.40.50.140">
    <property type="entry name" value="Nucleic acid-binding proteins"/>
    <property type="match status" value="1"/>
</dbReference>
<dbReference type="HAMAP" id="MF_00098">
    <property type="entry name" value="Met_tRNA_synth_type1"/>
    <property type="match status" value="1"/>
</dbReference>
<dbReference type="InterPro" id="IPR001412">
    <property type="entry name" value="aa-tRNA-synth_I_CS"/>
</dbReference>
<dbReference type="InterPro" id="IPR041872">
    <property type="entry name" value="Anticodon_Met"/>
</dbReference>
<dbReference type="InterPro" id="IPR004495">
    <property type="entry name" value="Met-tRNA-synth_bsu_C"/>
</dbReference>
<dbReference type="InterPro" id="IPR023458">
    <property type="entry name" value="Met-tRNA_ligase_1"/>
</dbReference>
<dbReference type="InterPro" id="IPR014758">
    <property type="entry name" value="Met-tRNA_synth"/>
</dbReference>
<dbReference type="InterPro" id="IPR015413">
    <property type="entry name" value="Methionyl/Leucyl_tRNA_Synth"/>
</dbReference>
<dbReference type="InterPro" id="IPR033911">
    <property type="entry name" value="MetRS_core"/>
</dbReference>
<dbReference type="InterPro" id="IPR029038">
    <property type="entry name" value="MetRS_Zn"/>
</dbReference>
<dbReference type="InterPro" id="IPR012340">
    <property type="entry name" value="NA-bd_OB-fold"/>
</dbReference>
<dbReference type="InterPro" id="IPR014729">
    <property type="entry name" value="Rossmann-like_a/b/a_fold"/>
</dbReference>
<dbReference type="InterPro" id="IPR002547">
    <property type="entry name" value="tRNA-bd_dom"/>
</dbReference>
<dbReference type="InterPro" id="IPR009080">
    <property type="entry name" value="tRNAsynth_Ia_anticodon-bd"/>
</dbReference>
<dbReference type="NCBIfam" id="TIGR00398">
    <property type="entry name" value="metG"/>
    <property type="match status" value="1"/>
</dbReference>
<dbReference type="NCBIfam" id="TIGR00399">
    <property type="entry name" value="metG_C_term"/>
    <property type="match status" value="1"/>
</dbReference>
<dbReference type="NCBIfam" id="NF001100">
    <property type="entry name" value="PRK00133.1"/>
    <property type="match status" value="1"/>
</dbReference>
<dbReference type="PANTHER" id="PTHR45765">
    <property type="entry name" value="METHIONINE--TRNA LIGASE"/>
    <property type="match status" value="1"/>
</dbReference>
<dbReference type="PANTHER" id="PTHR45765:SF1">
    <property type="entry name" value="METHIONINE--TRNA LIGASE, CYTOPLASMIC"/>
    <property type="match status" value="1"/>
</dbReference>
<dbReference type="Pfam" id="PF19303">
    <property type="entry name" value="Anticodon_3"/>
    <property type="match status" value="1"/>
</dbReference>
<dbReference type="Pfam" id="PF09334">
    <property type="entry name" value="tRNA-synt_1g"/>
    <property type="match status" value="1"/>
</dbReference>
<dbReference type="Pfam" id="PF01588">
    <property type="entry name" value="tRNA_bind"/>
    <property type="match status" value="1"/>
</dbReference>
<dbReference type="PRINTS" id="PR01041">
    <property type="entry name" value="TRNASYNTHMET"/>
</dbReference>
<dbReference type="SUPFAM" id="SSF47323">
    <property type="entry name" value="Anticodon-binding domain of a subclass of class I aminoacyl-tRNA synthetases"/>
    <property type="match status" value="1"/>
</dbReference>
<dbReference type="SUPFAM" id="SSF57770">
    <property type="entry name" value="Methionyl-tRNA synthetase (MetRS), Zn-domain"/>
    <property type="match status" value="1"/>
</dbReference>
<dbReference type="SUPFAM" id="SSF50249">
    <property type="entry name" value="Nucleic acid-binding proteins"/>
    <property type="match status" value="1"/>
</dbReference>
<dbReference type="SUPFAM" id="SSF52374">
    <property type="entry name" value="Nucleotidylyl transferase"/>
    <property type="match status" value="1"/>
</dbReference>
<dbReference type="PROSITE" id="PS00178">
    <property type="entry name" value="AA_TRNA_LIGASE_I"/>
    <property type="match status" value="1"/>
</dbReference>
<dbReference type="PROSITE" id="PS50886">
    <property type="entry name" value="TRBD"/>
    <property type="match status" value="1"/>
</dbReference>